<protein>
    <recommendedName>
        <fullName evidence="1">Protein-L-isoaspartate O-methyltransferase</fullName>
        <ecNumber evidence="1">2.1.1.77</ecNumber>
    </recommendedName>
    <alternativeName>
        <fullName evidence="1">L-isoaspartyl protein carboxyl methyltransferase</fullName>
    </alternativeName>
    <alternativeName>
        <fullName evidence="1">Protein L-isoaspartyl methyltransferase</fullName>
    </alternativeName>
    <alternativeName>
        <fullName evidence="1">Protein-beta-aspartate methyltransferase</fullName>
        <shortName evidence="1">PIMT</shortName>
    </alternativeName>
</protein>
<feature type="chain" id="PRO_0000111896" description="Protein-L-isoaspartate O-methyltransferase">
    <location>
        <begin position="1"/>
        <end position="209"/>
    </location>
</feature>
<feature type="active site" evidence="1">
    <location>
        <position position="60"/>
    </location>
</feature>
<dbReference type="EC" id="2.1.1.77" evidence="1"/>
<dbReference type="EMBL" id="CR378673">
    <property type="protein sequence ID" value="CAG21389.1"/>
    <property type="molecule type" value="Genomic_DNA"/>
</dbReference>
<dbReference type="RefSeq" id="WP_011219649.1">
    <property type="nucleotide sequence ID" value="NC_006370.1"/>
</dbReference>
<dbReference type="SMR" id="Q6LMT7"/>
<dbReference type="STRING" id="298386.PBPRA3073"/>
<dbReference type="KEGG" id="ppr:PBPRA3073"/>
<dbReference type="eggNOG" id="COG2518">
    <property type="taxonomic scope" value="Bacteria"/>
</dbReference>
<dbReference type="HOGENOM" id="CLU_055432_2_0_6"/>
<dbReference type="Proteomes" id="UP000000593">
    <property type="component" value="Chromosome 1"/>
</dbReference>
<dbReference type="GO" id="GO:0005737">
    <property type="term" value="C:cytoplasm"/>
    <property type="evidence" value="ECO:0007669"/>
    <property type="project" value="UniProtKB-SubCell"/>
</dbReference>
<dbReference type="GO" id="GO:0004719">
    <property type="term" value="F:protein-L-isoaspartate (D-aspartate) O-methyltransferase activity"/>
    <property type="evidence" value="ECO:0007669"/>
    <property type="project" value="UniProtKB-UniRule"/>
</dbReference>
<dbReference type="GO" id="GO:0032259">
    <property type="term" value="P:methylation"/>
    <property type="evidence" value="ECO:0007669"/>
    <property type="project" value="UniProtKB-KW"/>
</dbReference>
<dbReference type="GO" id="GO:0036211">
    <property type="term" value="P:protein modification process"/>
    <property type="evidence" value="ECO:0007669"/>
    <property type="project" value="UniProtKB-UniRule"/>
</dbReference>
<dbReference type="GO" id="GO:0030091">
    <property type="term" value="P:protein repair"/>
    <property type="evidence" value="ECO:0007669"/>
    <property type="project" value="UniProtKB-UniRule"/>
</dbReference>
<dbReference type="CDD" id="cd02440">
    <property type="entry name" value="AdoMet_MTases"/>
    <property type="match status" value="1"/>
</dbReference>
<dbReference type="FunFam" id="3.40.50.150:FF:000010">
    <property type="entry name" value="Protein-L-isoaspartate O-methyltransferase"/>
    <property type="match status" value="1"/>
</dbReference>
<dbReference type="Gene3D" id="3.40.50.150">
    <property type="entry name" value="Vaccinia Virus protein VP39"/>
    <property type="match status" value="1"/>
</dbReference>
<dbReference type="HAMAP" id="MF_00090">
    <property type="entry name" value="PIMT"/>
    <property type="match status" value="1"/>
</dbReference>
<dbReference type="InterPro" id="IPR000682">
    <property type="entry name" value="PCMT"/>
</dbReference>
<dbReference type="InterPro" id="IPR029063">
    <property type="entry name" value="SAM-dependent_MTases_sf"/>
</dbReference>
<dbReference type="NCBIfam" id="TIGR00080">
    <property type="entry name" value="pimt"/>
    <property type="match status" value="1"/>
</dbReference>
<dbReference type="NCBIfam" id="NF001453">
    <property type="entry name" value="PRK00312.1"/>
    <property type="match status" value="1"/>
</dbReference>
<dbReference type="PANTHER" id="PTHR11579">
    <property type="entry name" value="PROTEIN-L-ISOASPARTATE O-METHYLTRANSFERASE"/>
    <property type="match status" value="1"/>
</dbReference>
<dbReference type="PANTHER" id="PTHR11579:SF0">
    <property type="entry name" value="PROTEIN-L-ISOASPARTATE(D-ASPARTATE) O-METHYLTRANSFERASE"/>
    <property type="match status" value="1"/>
</dbReference>
<dbReference type="Pfam" id="PF01135">
    <property type="entry name" value="PCMT"/>
    <property type="match status" value="1"/>
</dbReference>
<dbReference type="SUPFAM" id="SSF53335">
    <property type="entry name" value="S-adenosyl-L-methionine-dependent methyltransferases"/>
    <property type="match status" value="1"/>
</dbReference>
<dbReference type="PROSITE" id="PS01279">
    <property type="entry name" value="PCMT"/>
    <property type="match status" value="1"/>
</dbReference>
<sequence length="209" mass="23282">MRYAKERHNLMVILQRHGIRNEKVLNAIASVPRELFIDEAFSHQAYENNALPIGSGQTISQPYIVGKMTELLELTAQSHVLEVGTGSGYQTAVLAQLVDHVYSVERIKALQWQAKRRLKQLNLHNISTKHGDGWKGWHNKGPFDAIIVTAAAEEMPMELLAQLTDGGRLVIPVGDDLQVLKKITRNGEQFVSQDIEAVRFVPLVAGDLA</sequence>
<reference key="1">
    <citation type="journal article" date="2005" name="Science">
        <title>Life at depth: Photobacterium profundum genome sequence and expression analysis.</title>
        <authorList>
            <person name="Vezzi A."/>
            <person name="Campanaro S."/>
            <person name="D'Angelo M."/>
            <person name="Simonato F."/>
            <person name="Vitulo N."/>
            <person name="Lauro F.M."/>
            <person name="Cestaro A."/>
            <person name="Malacrida G."/>
            <person name="Simionati B."/>
            <person name="Cannata N."/>
            <person name="Romualdi C."/>
            <person name="Bartlett D.H."/>
            <person name="Valle G."/>
        </authorList>
    </citation>
    <scope>NUCLEOTIDE SEQUENCE [LARGE SCALE GENOMIC DNA]</scope>
    <source>
        <strain>ATCC BAA-1253 / SS9</strain>
    </source>
</reference>
<proteinExistence type="inferred from homology"/>
<organism>
    <name type="scientific">Photobacterium profundum (strain SS9)</name>
    <dbReference type="NCBI Taxonomy" id="298386"/>
    <lineage>
        <taxon>Bacteria</taxon>
        <taxon>Pseudomonadati</taxon>
        <taxon>Pseudomonadota</taxon>
        <taxon>Gammaproteobacteria</taxon>
        <taxon>Vibrionales</taxon>
        <taxon>Vibrionaceae</taxon>
        <taxon>Photobacterium</taxon>
    </lineage>
</organism>
<keyword id="KW-0963">Cytoplasm</keyword>
<keyword id="KW-0489">Methyltransferase</keyword>
<keyword id="KW-1185">Reference proteome</keyword>
<keyword id="KW-0949">S-adenosyl-L-methionine</keyword>
<keyword id="KW-0808">Transferase</keyword>
<comment type="function">
    <text evidence="1">Catalyzes the methyl esterification of L-isoaspartyl residues in peptides and proteins that result from spontaneous decomposition of normal L-aspartyl and L-asparaginyl residues. It plays a role in the repair and/or degradation of damaged proteins.</text>
</comment>
<comment type="catalytic activity">
    <reaction evidence="1">
        <text>[protein]-L-isoaspartate + S-adenosyl-L-methionine = [protein]-L-isoaspartate alpha-methyl ester + S-adenosyl-L-homocysteine</text>
        <dbReference type="Rhea" id="RHEA:12705"/>
        <dbReference type="Rhea" id="RHEA-COMP:12143"/>
        <dbReference type="Rhea" id="RHEA-COMP:12144"/>
        <dbReference type="ChEBI" id="CHEBI:57856"/>
        <dbReference type="ChEBI" id="CHEBI:59789"/>
        <dbReference type="ChEBI" id="CHEBI:90596"/>
        <dbReference type="ChEBI" id="CHEBI:90598"/>
        <dbReference type="EC" id="2.1.1.77"/>
    </reaction>
</comment>
<comment type="subcellular location">
    <subcellularLocation>
        <location evidence="1">Cytoplasm</location>
    </subcellularLocation>
</comment>
<comment type="similarity">
    <text evidence="1">Belongs to the methyltransferase superfamily. L-isoaspartyl/D-aspartyl protein methyltransferase family.</text>
</comment>
<gene>
    <name evidence="1" type="primary">pcm</name>
    <name type="ordered locus">PBPRA3073</name>
</gene>
<name>PIMT_PHOPR</name>
<accession>Q6LMT7</accession>
<evidence type="ECO:0000255" key="1">
    <source>
        <dbReference type="HAMAP-Rule" id="MF_00090"/>
    </source>
</evidence>